<comment type="function">
    <text evidence="7 8 11 13 15">Alpha-conotoxins act on postsynaptic membranes, they bind to the nicotinic acetylcholine receptors (nAChR) and thus inhibit them. This toxin blocks neuronal alpha-3-beta-2/CHRNA3-CHRNB2 (human and rat), alpha-7/CHRNA7 (human and rat), and alpha-3-beta-4/CHRNA3-CHRNB4 (human) nAChRs (PubMed:15609996, PubMed:19131337, PubMed:8206995). Acts voltage-independently (PubMed:15609996). Competes with alpha-bungarotoxin for binding to the receptor (PubMed:12384509, PubMed:15609996). Binds to a different site than alpha-conotoxin ImII (PubMed:15609996). Is highly active against the neuromuscular receptor in frog (PubMed:8206995). Also exhibits inhibition of D.melanogaster alpha-7 nAChRs (PubMed:25466886).</text>
</comment>
<comment type="subcellular location">
    <subcellularLocation>
        <location evidence="15">Secreted</location>
    </subcellularLocation>
</comment>
<comment type="tissue specificity">
    <text evidence="19">Expressed by the venom duct.</text>
</comment>
<comment type="domain">
    <text evidence="19">The cysteine framework is I (CC-C-C). Alpha4/3 pattern.</text>
</comment>
<comment type="PTM">
    <text evidence="10">Not hydroxylated (PubMed:18189422). Hydroxylation improves its folding but impairs its activity against target receptors (PubMed:18189422).</text>
</comment>
<comment type="PTM">
    <text evidence="9">C-terminal amidation facilitates folding and correct disulfide pairing.</text>
</comment>
<comment type="mass spectrometry" mass="1351.48" method="Unknown" evidence="15">
    <text>Monoisotopic mass.</text>
</comment>
<comment type="miscellaneous">
    <text evidence="12">This toxin is a substrate for a multienzyme complex that regulates its folding and assembly. This complex is composed of protein-disulfide isomerase (PDI), peptidyl-prolyl cis-trans isomerase (PPI) and immunoglobulin-binding protein (BiP). PDI catalyzes the oxidation and reduction of disulfide bonds. Oxidative folding rates are further increased in the presence of PPI with the maximum effect observed in the presence of both enzymes. In contrast, BiP is only observed to assist folding in the presence of microsomes, suggesting that additional cofactors are involved. This toxin has been observed in the venom as globular (disulfide pattern C1-C3 and C2-C4) and ribbon form (C1-C4 and C2-C3).</text>
</comment>
<comment type="miscellaneous">
    <text evidence="8 14">Negative results: does not inhibit alpha-2-beta-2, alpha-4-beta-2, alpha-2-beta-4, alpha-3-beta-4, and alpha-4-beta-4 subunits (PubMed:15609996, PubMed:7651351). Also has no effect on muscle nAChRs alpha-1-beta-1-delta-epsilon (PubMed:15609996).</text>
</comment>
<comment type="similarity">
    <text evidence="19">Belongs to the conotoxin A superfamily.</text>
</comment>
<feature type="propeptide" id="PRO_0000273426" evidence="15">
    <location>
        <begin position="1" status="less than"/>
        <end position="4"/>
    </location>
</feature>
<feature type="peptide" id="PRO_0000034877" description="Alpha-conotoxin ImI" evidence="15">
    <location>
        <begin position="5"/>
        <end position="16"/>
    </location>
</feature>
<feature type="site" description="Important for binding to human alpha-7 nAChR" evidence="20">
    <location>
        <position position="9"/>
    </location>
</feature>
<feature type="site" description="Important for binding to human alpha-7 nAChR" evidence="20">
    <location>
        <position position="10"/>
    </location>
</feature>
<feature type="site" description="Important for binding to human alpha-7 nAChR" evidence="20">
    <location>
        <position position="11"/>
    </location>
</feature>
<feature type="site" description="Important for binding to human alpha-7 nAChR" evidence="20">
    <location>
        <position position="13"/>
    </location>
</feature>
<feature type="site" description="Important for binding to human alpha-7 nAChR" evidence="20">
    <location>
        <position position="14"/>
    </location>
</feature>
<feature type="modified residue" description="Cysteine amide" evidence="15">
    <location>
        <position position="16"/>
    </location>
</feature>
<feature type="disulfide bond" description="In Imi-ribbon form; alternate" evidence="12">
    <location>
        <begin position="6"/>
        <end position="16"/>
    </location>
</feature>
<feature type="disulfide bond" description="In Imi-globular form; alternate" evidence="1 2 3 4 5 6">
    <location>
        <begin position="6"/>
        <end position="12"/>
    </location>
</feature>
<feature type="disulfide bond" description="In Imi-globular form; alternate" evidence="1 2 3 4 5 6">
    <location>
        <begin position="7"/>
        <end position="16"/>
    </location>
</feature>
<feature type="disulfide bond" description="In Imi-ribbon form; alternate" evidence="12">
    <location>
        <begin position="7"/>
        <end position="12"/>
    </location>
</feature>
<feature type="mutagenesis site" description="Reduction of toxicity." evidence="6">
    <original>D</original>
    <variation>L</variation>
    <location>
        <position position="9"/>
    </location>
</feature>
<feature type="mutagenesis site" description="Loss of ability to compete with alpha-bungarotoxin." evidence="7">
    <original>P</original>
    <variation>R</variation>
    <location>
        <position position="10"/>
    </location>
</feature>
<feature type="mutagenesis site" description="Reduction of toxicity." evidence="6">
    <original>R</original>
    <variation>L</variation>
    <location>
        <position position="11"/>
    </location>
</feature>
<feature type="mutagenesis site" description="No loss of activity." evidence="6">
    <original>R</original>
    <variation>E</variation>
    <location>
        <position position="15"/>
    </location>
</feature>
<feature type="non-terminal residue">
    <location>
        <position position="1"/>
    </location>
</feature>
<feature type="helix" evidence="21">
    <location>
        <begin position="6"/>
        <end position="8"/>
    </location>
</feature>
<feature type="turn" evidence="21">
    <location>
        <begin position="10"/>
        <end position="12"/>
    </location>
</feature>
<feature type="helix" evidence="21">
    <location>
        <begin position="13"/>
        <end position="15"/>
    </location>
</feature>
<accession>P50983</accession>
<accession>Q8I6R4</accession>
<keyword id="KW-0002">3D-structure</keyword>
<keyword id="KW-0008">Acetylcholine receptor inhibiting toxin</keyword>
<keyword id="KW-0027">Amidation</keyword>
<keyword id="KW-0165">Cleavage on pair of basic residues</keyword>
<keyword id="KW-0903">Direct protein sequencing</keyword>
<keyword id="KW-1015">Disulfide bond</keyword>
<keyword id="KW-0872">Ion channel impairing toxin</keyword>
<keyword id="KW-0528">Neurotoxin</keyword>
<keyword id="KW-0629">Postsynaptic neurotoxin</keyword>
<keyword id="KW-0964">Secreted</keyword>
<keyword id="KW-0800">Toxin</keyword>
<reference key="1">
    <citation type="journal article" date="2003" name="J. Biol. Chem.">
        <title>Alpha-conotoxins ImI and ImII: similar alpha 7 nicotinic receptor antagonists act at different sites.</title>
        <authorList>
            <person name="Ellison M.A."/>
            <person name="McIntosh J.M."/>
            <person name="Olivera B.M."/>
        </authorList>
    </citation>
    <scope>NUCLEOTIDE SEQUENCE [GENOMIC DNA]</scope>
    <scope>SYNTHESIS OF 5-16</scope>
    <scope>FUNCTION</scope>
    <scope>MUTAGENESIS OF PRO-10</scope>
    <source>
        <tissue>Venom duct</tissue>
    </source>
</reference>
<reference key="2">
    <citation type="journal article" date="1994" name="J. Biol. Chem.">
        <title>A nicotinic acetylcholine receptor ligand of unique specificity, alpha-conotoxin ImI.</title>
        <authorList>
            <person name="McIntosh J.M."/>
            <person name="Yoshikami D."/>
            <person name="Mahe E."/>
            <person name="Nielsen D.B."/>
            <person name="Rivier J.E."/>
            <person name="Gray W.R."/>
            <person name="Olivera B.M."/>
        </authorList>
    </citation>
    <scope>PROTEIN SEQUENCE OF 5-16</scope>
    <scope>FUNCTION</scope>
    <scope>SYNTHESIS OF 5-16</scope>
    <scope>DISULFIDE BONDS</scope>
    <scope>SUBCELLULAR LOCATION</scope>
    <scope>AMIDATION AT CYS-16</scope>
    <scope>MASS SPECTROMETRY</scope>
    <source>
        <tissue>Venom</tissue>
    </source>
</reference>
<reference key="3">
    <citation type="journal article" date="1995" name="Mol. Pharmacol.">
        <title>Alpha-conotoxin ImI exhibits subtype-specific nicotinic acetylcholine receptor blockade: preferential inhibition of homomeric alpha 7 and alpha 9 receptors.</title>
        <authorList>
            <person name="Johnson D.S."/>
            <person name="Martinez J."/>
            <person name="Elgoyhen A.B."/>
            <person name="Heinemann S.F."/>
            <person name="McIntosh J.M."/>
        </authorList>
    </citation>
    <scope>FUNCTION</scope>
    <scope>SYNTHESIS OF 5-16</scope>
</reference>
<reference key="4">
    <citation type="journal article" date="2004" name="Biochemistry">
        <title>Alpha-conotoxins ImI and ImII target distinct regions of the human alpha7 nicotinic acetylcholine receptor and distinguish human nicotinic receptor subtypes.</title>
        <authorList>
            <person name="Ellison M."/>
            <person name="Gao F."/>
            <person name="Wang H.L."/>
            <person name="Sine S.M."/>
            <person name="McIntosh J.M."/>
            <person name="Olivera B.M."/>
        </authorList>
    </citation>
    <scope>FUNCTION</scope>
    <scope>SYNTHESIS OF 5-16</scope>
    <scope>3D-STRUCTURE MODELING</scope>
    <scope>SUBUNIT</scope>
</reference>
<reference key="5">
    <citation type="journal article" date="2005" name="Angew. Chem. Int. Ed.">
        <title>Effect of C-terminal amidation on folding and disulfide-pairing of alpha-conotoxin ImI.</title>
        <authorList>
            <person name="Kang T.S."/>
            <person name="Vivekanandan S."/>
            <person name="Jois S.D."/>
            <person name="Kini R.M."/>
        </authorList>
    </citation>
    <scope>PTM</scope>
</reference>
<reference key="6">
    <citation type="journal article" date="2008" name="Biochemistry">
        <title>Role of hydroxyprolines in the in vitro oxidative folding and biological activity of conotoxins.</title>
        <authorList>
            <person name="Lopez-Vera E."/>
            <person name="Walewska A."/>
            <person name="Skalicky J.J."/>
            <person name="Olivera B.M."/>
            <person name="Bulaj G."/>
        </authorList>
    </citation>
    <scope>SYNTHESIS OF 5-16</scope>
    <scope>ROLE OF HYDROXYLATION</scope>
</reference>
<reference key="7">
    <citation type="journal article" date="2009" name="J. Biol. Chem.">
        <title>Rational design of alpha-conotoxin analogues targeting alpha7 nicotinic acetylcholine receptors: improved antagonistic activity by incorporation of proline derivatives.</title>
        <authorList>
            <person name="Armishaw C."/>
            <person name="Jensen A.A."/>
            <person name="Balle T."/>
            <person name="Clark R.J."/>
            <person name="Harpsoee K."/>
            <person name="Skonberg C."/>
            <person name="Liljefors T."/>
            <person name="Stroemgaard K."/>
        </authorList>
    </citation>
    <scope>FUNCTION ON ALPHA-7 AND ALPHA-3-BETA-4</scope>
    <scope>SYNTHESIS OF 5-16</scope>
</reference>
<reference key="8">
    <citation type="journal article" date="2012" name="J. Biol. Chem.">
        <title>Modulation of conotoxin structure and function is achieved through a multienzyme complex in the venom glands of cone snails.</title>
        <authorList>
            <person name="Safavi-Hemami H."/>
            <person name="Gorasia D.G."/>
            <person name="Steiner A.M."/>
            <person name="Williamson N.A."/>
            <person name="Karas J.A."/>
            <person name="Gajewiak J."/>
            <person name="Olivera B.M."/>
            <person name="Bulaj G."/>
            <person name="Purcell A.W."/>
        </authorList>
    </citation>
    <scope>DISULFIDE BONDS (RIBBON FORM)</scope>
    <scope>FOLDING</scope>
    <source>
        <tissue>Venom</tissue>
    </source>
</reference>
<reference key="9">
    <citation type="journal article" date="2015" name="FASEB J.">
        <title>Inhibition of cholinergic pathways in Drosophila melanogaster by alpha-conotoxins.</title>
        <authorList>
            <person name="Heghinian M.D."/>
            <person name="Mejia M."/>
            <person name="Adams D.J."/>
            <person name="Godenschwege T.A."/>
            <person name="Mari F."/>
        </authorList>
    </citation>
    <scope>FUNCTION</scope>
</reference>
<reference key="10">
    <citation type="journal article" date="1999" name="Biochemistry">
        <title>NMR solution structure of alpha-conotoxin ImI and comparison to other conotoxins specific for neuronal nicotinic acetylcholine receptors.</title>
        <authorList>
            <person name="Rogers J.P."/>
            <person name="Luginbuehl P."/>
            <person name="Shen G.S."/>
            <person name="McCabe R.T."/>
            <person name="Stevens R.C."/>
            <person name="Wemmer D.E."/>
        </authorList>
    </citation>
    <scope>STRUCTURE BY NMR OF 5-16</scope>
    <scope>DISULFIDE BONDS</scope>
</reference>
<reference key="11">
    <citation type="journal article" date="1999" name="Biochim. Biophys. Acta">
        <title>Solution structure of alpha-conotoxin ImI determined by two-dimensional NMR spectroscopy.</title>
        <authorList>
            <person name="Gouda H."/>
            <person name="Hirono S."/>
        </authorList>
    </citation>
    <scope>STRUCTURE BY NMR OF 5-16</scope>
    <scope>DISULFIDE BONDS</scope>
</reference>
<reference key="12">
    <citation type="journal article" date="1999" name="FEBS Lett.">
        <title>NMR spatial structure of alpha-conotoxin ImI reveals a common scaffold in snail and snake toxins recognizing neuronal nicotinic acetylcholine receptors.</title>
        <authorList>
            <person name="Maslennikov I.V."/>
            <person name="Shenkarev Z.O."/>
            <person name="Zhmak M.N."/>
            <person name="Ivanov V.T."/>
            <person name="Methfessel C."/>
            <person name="Tsetlin V.I."/>
            <person name="Arseniev A.S."/>
        </authorList>
    </citation>
    <scope>STRUCTURE BY NMR OF 5-16</scope>
    <scope>DISULFIDE BONDS</scope>
</reference>
<reference key="13">
    <citation type="journal article" date="1999" name="FEBS Lett.">
        <title>Minimal conformation of the alpha-conotoxin ImI for the alpha7 neuronal nicotinic acetylcholine receptor recognition: correlated CD, NMR and binding studies.</title>
        <authorList>
            <person name="Lamthanh H."/>
            <person name="Jegou-Matheron C."/>
            <person name="Servent D."/>
            <person name="Menez A."/>
            <person name="Lancelin J.-M."/>
        </authorList>
    </citation>
    <scope>STRUCTURE BY NMR OF 5-16</scope>
    <scope>DISULFIDE BONDS</scope>
</reference>
<reference key="14">
    <citation type="journal article" date="1999" name="J. Med. Chem.">
        <title>Solution structure of alpha-conotoxin ImI by 1H nuclear magnetic resonance.</title>
        <authorList>
            <person name="Gehrmann J."/>
            <person name="Daly N.L."/>
            <person name="Alewood P.F."/>
            <person name="Craik D.J."/>
        </authorList>
    </citation>
    <scope>STRUCTURE BY NMR OF 5-16</scope>
    <scope>DISULFIDE BONDS</scope>
</reference>
<reference key="15">
    <citation type="journal article" date="2000" name="J. Mol. Biol.">
        <title>Structure-activity relationships in a peptidic alpha7 nicotinic acetylcholine receptor antagonist.</title>
        <authorList>
            <person name="Rogers J.P."/>
            <person name="Luginbuhl P."/>
            <person name="Pemberton K."/>
            <person name="Harty P."/>
            <person name="Wemmer D.E."/>
            <person name="Stevens R.C."/>
        </authorList>
    </citation>
    <scope>MUTAGENESIS OF ASP-9; ARG-11 AND ARG-15</scope>
    <scope>STRUCTURE BY NMR OF 5-16 OF THESE THREE MUTANTS</scope>
    <scope>DISULFIDE BONDS</scope>
</reference>
<sequence length="17" mass="1938">IVRRGCCSDPRCAWRCG</sequence>
<dbReference type="EMBL" id="AY159318">
    <property type="protein sequence ID" value="AAN78128.1"/>
    <property type="molecule type" value="Genomic_DNA"/>
</dbReference>
<dbReference type="PIR" id="A53709">
    <property type="entry name" value="A53709"/>
</dbReference>
<dbReference type="PDB" id="1CNL">
    <property type="method" value="NMR"/>
    <property type="chains" value="A=5-16"/>
</dbReference>
<dbReference type="PDB" id="1E74">
    <property type="method" value="NMR"/>
    <property type="chains" value="A=5-14"/>
</dbReference>
<dbReference type="PDB" id="1E75">
    <property type="method" value="NMR"/>
    <property type="chains" value="A=5-16"/>
</dbReference>
<dbReference type="PDB" id="1E76">
    <property type="method" value="NMR"/>
    <property type="chains" value="A=5-16"/>
</dbReference>
<dbReference type="PDB" id="1G2G">
    <property type="method" value="NMR"/>
    <property type="chains" value="A=5-16"/>
</dbReference>
<dbReference type="PDB" id="1IM1">
    <property type="method" value="NMR"/>
    <property type="chains" value="A=5-16"/>
</dbReference>
<dbReference type="PDB" id="1IMI">
    <property type="method" value="NMR"/>
    <property type="chains" value="A=5-16"/>
</dbReference>
<dbReference type="PDB" id="2BC7">
    <property type="method" value="NMR"/>
    <property type="chains" value="A=5-16"/>
</dbReference>
<dbReference type="PDB" id="2BC8">
    <property type="method" value="NMR"/>
    <property type="chains" value="A=5-16"/>
</dbReference>
<dbReference type="PDB" id="2BYP">
    <property type="method" value="X-ray"/>
    <property type="resolution" value="2.07 A"/>
    <property type="chains" value="F/G/H/I/J=5-16"/>
</dbReference>
<dbReference type="PDB" id="2C9T">
    <property type="method" value="X-ray"/>
    <property type="resolution" value="2.25 A"/>
    <property type="chains" value="K/M/O/P/Q/R/S/T=5-16"/>
</dbReference>
<dbReference type="PDB" id="2IGU">
    <property type="method" value="NMR"/>
    <property type="chains" value="A=5-16"/>
</dbReference>
<dbReference type="PDB" id="2MOA">
    <property type="method" value="NMR"/>
    <property type="chains" value="A=5-16"/>
</dbReference>
<dbReference type="PDBsum" id="1CNL"/>
<dbReference type="PDBsum" id="1E74"/>
<dbReference type="PDBsum" id="1E75"/>
<dbReference type="PDBsum" id="1E76"/>
<dbReference type="PDBsum" id="1G2G"/>
<dbReference type="PDBsum" id="1IM1"/>
<dbReference type="PDBsum" id="1IMI"/>
<dbReference type="PDBsum" id="2BC7"/>
<dbReference type="PDBsum" id="2BC8"/>
<dbReference type="PDBsum" id="2BYP"/>
<dbReference type="PDBsum" id="2C9T"/>
<dbReference type="PDBsum" id="2IGU"/>
<dbReference type="PDBsum" id="2MOA"/>
<dbReference type="SMR" id="P50983"/>
<dbReference type="DIP" id="DIP-61127N"/>
<dbReference type="IntAct" id="P50983">
    <property type="interactions" value="1"/>
</dbReference>
<dbReference type="ConoServer" id="93">
    <property type="toxin name" value="ImI precursor"/>
</dbReference>
<dbReference type="EvolutionaryTrace" id="P50983"/>
<dbReference type="GO" id="GO:0005576">
    <property type="term" value="C:extracellular region"/>
    <property type="evidence" value="ECO:0007669"/>
    <property type="project" value="UniProtKB-SubCell"/>
</dbReference>
<dbReference type="GO" id="GO:0035792">
    <property type="term" value="C:host cell postsynaptic membrane"/>
    <property type="evidence" value="ECO:0007669"/>
    <property type="project" value="UniProtKB-KW"/>
</dbReference>
<dbReference type="GO" id="GO:0030550">
    <property type="term" value="F:acetylcholine receptor inhibitor activity"/>
    <property type="evidence" value="ECO:0007669"/>
    <property type="project" value="UniProtKB-KW"/>
</dbReference>
<dbReference type="GO" id="GO:0099106">
    <property type="term" value="F:ion channel regulator activity"/>
    <property type="evidence" value="ECO:0007669"/>
    <property type="project" value="UniProtKB-KW"/>
</dbReference>
<dbReference type="GO" id="GO:0090729">
    <property type="term" value="F:toxin activity"/>
    <property type="evidence" value="ECO:0007669"/>
    <property type="project" value="UniProtKB-KW"/>
</dbReference>
<dbReference type="InterPro" id="IPR018072">
    <property type="entry name" value="Conotoxin_a-typ_CS"/>
</dbReference>
<dbReference type="PROSITE" id="PS60014">
    <property type="entry name" value="ALPHA_CONOTOXIN"/>
    <property type="match status" value="1"/>
</dbReference>
<proteinExistence type="evidence at protein level"/>
<evidence type="ECO:0000269" key="1">
    <source>
    </source>
</evidence>
<evidence type="ECO:0000269" key="2">
    <source>
    </source>
</evidence>
<evidence type="ECO:0000269" key="3">
    <source>
    </source>
</evidence>
<evidence type="ECO:0000269" key="4">
    <source>
    </source>
</evidence>
<evidence type="ECO:0000269" key="5">
    <source>
    </source>
</evidence>
<evidence type="ECO:0000269" key="6">
    <source>
    </source>
</evidence>
<evidence type="ECO:0000269" key="7">
    <source>
    </source>
</evidence>
<evidence type="ECO:0000269" key="8">
    <source>
    </source>
</evidence>
<evidence type="ECO:0000269" key="9">
    <source>
    </source>
</evidence>
<evidence type="ECO:0000269" key="10">
    <source>
    </source>
</evidence>
<evidence type="ECO:0000269" key="11">
    <source>
    </source>
</evidence>
<evidence type="ECO:0000269" key="12">
    <source>
    </source>
</evidence>
<evidence type="ECO:0000269" key="13">
    <source>
    </source>
</evidence>
<evidence type="ECO:0000269" key="14">
    <source>
    </source>
</evidence>
<evidence type="ECO:0000269" key="15">
    <source>
    </source>
</evidence>
<evidence type="ECO:0000303" key="16">
    <source>
    </source>
</evidence>
<evidence type="ECO:0000303" key="17">
    <source>
    </source>
</evidence>
<evidence type="ECO:0000303" key="18">
    <source>
    </source>
</evidence>
<evidence type="ECO:0000305" key="19"/>
<evidence type="ECO:0000305" key="20">
    <source>
    </source>
</evidence>
<evidence type="ECO:0007829" key="21">
    <source>
        <dbReference type="PDB" id="2BYP"/>
    </source>
</evidence>
<organism>
    <name type="scientific">Conus imperialis</name>
    <name type="common">Imperial cone</name>
    <dbReference type="NCBI Taxonomy" id="35631"/>
    <lineage>
        <taxon>Eukaryota</taxon>
        <taxon>Metazoa</taxon>
        <taxon>Spiralia</taxon>
        <taxon>Lophotrochozoa</taxon>
        <taxon>Mollusca</taxon>
        <taxon>Gastropoda</taxon>
        <taxon>Caenogastropoda</taxon>
        <taxon>Neogastropoda</taxon>
        <taxon>Conoidea</taxon>
        <taxon>Conidae</taxon>
        <taxon>Conus</taxon>
        <taxon>Stephanoconus</taxon>
    </lineage>
</organism>
<name>CA1_CONIM</name>
<protein>
    <recommendedName>
        <fullName evidence="17 18">Alpha-conotoxin ImI</fullName>
        <shortName evidence="16">Alpha-CTx ImI</shortName>
    </recommendedName>
</protein>